<name>SYR_CERS4</name>
<accession>Q3J281</accession>
<feature type="chain" id="PRO_0000242077" description="Arginine--tRNA ligase">
    <location>
        <begin position="1"/>
        <end position="580"/>
    </location>
</feature>
<feature type="short sequence motif" description="'HIGH' region">
    <location>
        <begin position="131"/>
        <end position="141"/>
    </location>
</feature>
<proteinExistence type="inferred from homology"/>
<protein>
    <recommendedName>
        <fullName evidence="1">Arginine--tRNA ligase</fullName>
        <ecNumber evidence="1">6.1.1.19</ecNumber>
    </recommendedName>
    <alternativeName>
        <fullName evidence="1">Arginyl-tRNA synthetase</fullName>
        <shortName evidence="1">ArgRS</shortName>
    </alternativeName>
</protein>
<comment type="catalytic activity">
    <reaction evidence="1">
        <text>tRNA(Arg) + L-arginine + ATP = L-arginyl-tRNA(Arg) + AMP + diphosphate</text>
        <dbReference type="Rhea" id="RHEA:20301"/>
        <dbReference type="Rhea" id="RHEA-COMP:9658"/>
        <dbReference type="Rhea" id="RHEA-COMP:9673"/>
        <dbReference type="ChEBI" id="CHEBI:30616"/>
        <dbReference type="ChEBI" id="CHEBI:32682"/>
        <dbReference type="ChEBI" id="CHEBI:33019"/>
        <dbReference type="ChEBI" id="CHEBI:78442"/>
        <dbReference type="ChEBI" id="CHEBI:78513"/>
        <dbReference type="ChEBI" id="CHEBI:456215"/>
        <dbReference type="EC" id="6.1.1.19"/>
    </reaction>
</comment>
<comment type="subunit">
    <text evidence="1">Monomer.</text>
</comment>
<comment type="subcellular location">
    <subcellularLocation>
        <location evidence="1">Cytoplasm</location>
    </subcellularLocation>
</comment>
<comment type="similarity">
    <text evidence="1">Belongs to the class-I aminoacyl-tRNA synthetase family.</text>
</comment>
<keyword id="KW-0030">Aminoacyl-tRNA synthetase</keyword>
<keyword id="KW-0067">ATP-binding</keyword>
<keyword id="KW-0963">Cytoplasm</keyword>
<keyword id="KW-0436">Ligase</keyword>
<keyword id="KW-0547">Nucleotide-binding</keyword>
<keyword id="KW-0648">Protein biosynthesis</keyword>
<keyword id="KW-1185">Reference proteome</keyword>
<dbReference type="EC" id="6.1.1.19" evidence="1"/>
<dbReference type="EMBL" id="CP000143">
    <property type="protein sequence ID" value="ABA79103.2"/>
    <property type="molecule type" value="Genomic_DNA"/>
</dbReference>
<dbReference type="RefSeq" id="WP_017140224.1">
    <property type="nucleotide sequence ID" value="NC_007493.2"/>
</dbReference>
<dbReference type="RefSeq" id="YP_353004.2">
    <property type="nucleotide sequence ID" value="NC_007493.2"/>
</dbReference>
<dbReference type="SMR" id="Q3J281"/>
<dbReference type="STRING" id="272943.RSP_2943"/>
<dbReference type="DNASU" id="3720683"/>
<dbReference type="EnsemblBacteria" id="ABA79103">
    <property type="protein sequence ID" value="ABA79103"/>
    <property type="gene ID" value="RSP_2943"/>
</dbReference>
<dbReference type="GeneID" id="3720683"/>
<dbReference type="KEGG" id="rsp:RSP_2943"/>
<dbReference type="PATRIC" id="fig|272943.9.peg.1880"/>
<dbReference type="eggNOG" id="COG0018">
    <property type="taxonomic scope" value="Bacteria"/>
</dbReference>
<dbReference type="OrthoDB" id="9803211at2"/>
<dbReference type="Proteomes" id="UP000002703">
    <property type="component" value="Chromosome 1"/>
</dbReference>
<dbReference type="GO" id="GO:0005737">
    <property type="term" value="C:cytoplasm"/>
    <property type="evidence" value="ECO:0007669"/>
    <property type="project" value="UniProtKB-SubCell"/>
</dbReference>
<dbReference type="GO" id="GO:0004814">
    <property type="term" value="F:arginine-tRNA ligase activity"/>
    <property type="evidence" value="ECO:0007669"/>
    <property type="project" value="UniProtKB-UniRule"/>
</dbReference>
<dbReference type="GO" id="GO:0005524">
    <property type="term" value="F:ATP binding"/>
    <property type="evidence" value="ECO:0007669"/>
    <property type="project" value="UniProtKB-UniRule"/>
</dbReference>
<dbReference type="GO" id="GO:0006420">
    <property type="term" value="P:arginyl-tRNA aminoacylation"/>
    <property type="evidence" value="ECO:0007669"/>
    <property type="project" value="UniProtKB-UniRule"/>
</dbReference>
<dbReference type="CDD" id="cd00671">
    <property type="entry name" value="ArgRS_core"/>
    <property type="match status" value="1"/>
</dbReference>
<dbReference type="FunFam" id="3.40.50.620:FF:000062">
    <property type="entry name" value="Arginine--tRNA ligase"/>
    <property type="match status" value="1"/>
</dbReference>
<dbReference type="Gene3D" id="3.30.1360.70">
    <property type="entry name" value="Arginyl tRNA synthetase N-terminal domain"/>
    <property type="match status" value="1"/>
</dbReference>
<dbReference type="Gene3D" id="3.40.50.620">
    <property type="entry name" value="HUPs"/>
    <property type="match status" value="1"/>
</dbReference>
<dbReference type="Gene3D" id="1.10.730.10">
    <property type="entry name" value="Isoleucyl-tRNA Synthetase, Domain 1"/>
    <property type="match status" value="1"/>
</dbReference>
<dbReference type="HAMAP" id="MF_00123">
    <property type="entry name" value="Arg_tRNA_synth"/>
    <property type="match status" value="1"/>
</dbReference>
<dbReference type="InterPro" id="IPR001412">
    <property type="entry name" value="aa-tRNA-synth_I_CS"/>
</dbReference>
<dbReference type="InterPro" id="IPR001278">
    <property type="entry name" value="Arg-tRNA-ligase"/>
</dbReference>
<dbReference type="InterPro" id="IPR005148">
    <property type="entry name" value="Arg-tRNA-synth_N"/>
</dbReference>
<dbReference type="InterPro" id="IPR036695">
    <property type="entry name" value="Arg-tRNA-synth_N_sf"/>
</dbReference>
<dbReference type="InterPro" id="IPR035684">
    <property type="entry name" value="ArgRS_core"/>
</dbReference>
<dbReference type="InterPro" id="IPR008909">
    <property type="entry name" value="DALR_anticod-bd"/>
</dbReference>
<dbReference type="InterPro" id="IPR014729">
    <property type="entry name" value="Rossmann-like_a/b/a_fold"/>
</dbReference>
<dbReference type="InterPro" id="IPR009080">
    <property type="entry name" value="tRNAsynth_Ia_anticodon-bd"/>
</dbReference>
<dbReference type="NCBIfam" id="TIGR00456">
    <property type="entry name" value="argS"/>
    <property type="match status" value="1"/>
</dbReference>
<dbReference type="PANTHER" id="PTHR11956:SF5">
    <property type="entry name" value="ARGININE--TRNA LIGASE, CYTOPLASMIC"/>
    <property type="match status" value="1"/>
</dbReference>
<dbReference type="PANTHER" id="PTHR11956">
    <property type="entry name" value="ARGINYL-TRNA SYNTHETASE"/>
    <property type="match status" value="1"/>
</dbReference>
<dbReference type="Pfam" id="PF03485">
    <property type="entry name" value="Arg_tRNA_synt_N"/>
    <property type="match status" value="1"/>
</dbReference>
<dbReference type="Pfam" id="PF05746">
    <property type="entry name" value="DALR_1"/>
    <property type="match status" value="1"/>
</dbReference>
<dbReference type="Pfam" id="PF00750">
    <property type="entry name" value="tRNA-synt_1d"/>
    <property type="match status" value="1"/>
</dbReference>
<dbReference type="PRINTS" id="PR01038">
    <property type="entry name" value="TRNASYNTHARG"/>
</dbReference>
<dbReference type="SMART" id="SM01016">
    <property type="entry name" value="Arg_tRNA_synt_N"/>
    <property type="match status" value="1"/>
</dbReference>
<dbReference type="SMART" id="SM00836">
    <property type="entry name" value="DALR_1"/>
    <property type="match status" value="1"/>
</dbReference>
<dbReference type="SUPFAM" id="SSF47323">
    <property type="entry name" value="Anticodon-binding domain of a subclass of class I aminoacyl-tRNA synthetases"/>
    <property type="match status" value="1"/>
</dbReference>
<dbReference type="SUPFAM" id="SSF55190">
    <property type="entry name" value="Arginyl-tRNA synthetase (ArgRS), N-terminal 'additional' domain"/>
    <property type="match status" value="1"/>
</dbReference>
<dbReference type="SUPFAM" id="SSF52374">
    <property type="entry name" value="Nucleotidylyl transferase"/>
    <property type="match status" value="1"/>
</dbReference>
<dbReference type="PROSITE" id="PS00178">
    <property type="entry name" value="AA_TRNA_LIGASE_I"/>
    <property type="match status" value="1"/>
</dbReference>
<evidence type="ECO:0000255" key="1">
    <source>
        <dbReference type="HAMAP-Rule" id="MF_00123"/>
    </source>
</evidence>
<sequence>MNLFTEIRTLVTAELGAMTEAGDLPAGLDLSAVAVEPPRDPAHGDMSTNAAMVLAKPSGKPPRTIAEALATRLAADPRISSAEVAGPGFLNLRLRPAVWQGMVATILQAGDTYGRSTIGAGQKVNVEFVSANPTGPMHVGHVRGAVVGDALARLLAYAGWNVTREYYINDGGAQVDVLARSAFERYREAHGLEPEIREGLYPGDYLIPVGEALKAKYGDSLLDKGEQHWLTEVREFATEMMMQMIREDLAALGVEMDVYSSEKALYGTGKIEAALDRLKEMDLIYEGVLEPPKGKTPEDWEPREQTLFRSTAHGDDVDRPVKKSDGSWTYFAPDIAYHYDKVTRGFDQLIDIFGADHGGYVKRMKAAVAALSAGRVPLDIKLIQLVKLWKNGEPFKMSKRAGTYVTLRDVVEQVGTDVTRFVMLTRKNDATLDFDFDKVLEQSKENPVFYVQYANARINSVLRKAREQGMDVSDATLATADLDRLDHPAEIALIAKLAEWPRLVEIAARTNEPHRVAFYLHELASELHGLWNRGNDEAGLRFLQDDPVVSQAKIALARAVGVVICAGLGILGVTPVEEMR</sequence>
<reference key="1">
    <citation type="submission" date="2005-09" db="EMBL/GenBank/DDBJ databases">
        <title>Complete sequence of chromosome 1 of Rhodobacter sphaeroides 2.4.1.</title>
        <authorList>
            <person name="Copeland A."/>
            <person name="Lucas S."/>
            <person name="Lapidus A."/>
            <person name="Barry K."/>
            <person name="Detter J.C."/>
            <person name="Glavina T."/>
            <person name="Hammon N."/>
            <person name="Israni S."/>
            <person name="Pitluck S."/>
            <person name="Richardson P."/>
            <person name="Mackenzie C."/>
            <person name="Choudhary M."/>
            <person name="Larimer F."/>
            <person name="Hauser L.J."/>
            <person name="Land M."/>
            <person name="Donohue T.J."/>
            <person name="Kaplan S."/>
        </authorList>
    </citation>
    <scope>NUCLEOTIDE SEQUENCE [LARGE SCALE GENOMIC DNA]</scope>
    <source>
        <strain>ATCC 17023 / DSM 158 / JCM 6121 / CCUG 31486 / LMG 2827 / NBRC 12203 / NCIMB 8253 / ATH 2.4.1.</strain>
    </source>
</reference>
<organism>
    <name type="scientific">Cereibacter sphaeroides (strain ATCC 17023 / DSM 158 / JCM 6121 / CCUG 31486 / LMG 2827 / NBRC 12203 / NCIMB 8253 / ATH 2.4.1.)</name>
    <name type="common">Rhodobacter sphaeroides</name>
    <dbReference type="NCBI Taxonomy" id="272943"/>
    <lineage>
        <taxon>Bacteria</taxon>
        <taxon>Pseudomonadati</taxon>
        <taxon>Pseudomonadota</taxon>
        <taxon>Alphaproteobacteria</taxon>
        <taxon>Rhodobacterales</taxon>
        <taxon>Paracoccaceae</taxon>
        <taxon>Cereibacter</taxon>
    </lineage>
</organism>
<gene>
    <name evidence="1" type="primary">argS</name>
    <name type="ordered locus">RHOS4_15350</name>
    <name type="ORF">RSP_2943</name>
</gene>